<comment type="function">
    <text evidence="1">Cyclin which controls both the G1/S and the G2/M transition phases of the cell cycle. Functions through the formation of specific serine/threonine kinase holoenzyme complexes with the cyclin-dependent protein kinases CDK1 and CDK2. The cyclin subunit confers the substrate specificity of these complexes and differentially interacts with and activates CDK1 and CDK2 throughout the cell cycle.</text>
</comment>
<comment type="subunit">
    <text evidence="1">Interacts with the CDK1 and CDK2 protein kinases to form serine/threonine kinase holoenzyme complexes. Interacts with CDK1 (hyperphosphorylated form in G1 and underphosphorylated forms in S and G2). Interacts with CDK2; the interaction increases from G1 to G2. Interacts (associated with CDK2 but not with CDK1) with SCAPER; regulates the activity of CCNA2/CDK2 by transiently maintaining CCNA2 in the cytoplasm. Forms a ternary complex with CDK2 and CDKN1B; CDKN1B inhibits the kinase activity of CDK2 through conformational rearrangements. Interacts with INCA1.</text>
</comment>
<comment type="interaction">
    <interactant intactId="EBI-15688654">
        <id>P30274</id>
    </interactant>
    <interactant intactId="EBI-375096">
        <id>P24941</id>
        <label>CDK2</label>
    </interactant>
    <organismsDiffer>true</organismsDiffer>
    <experiments>2</experiments>
</comment>
<comment type="subcellular location">
    <subcellularLocation>
        <location evidence="1">Nucleus</location>
    </subcellularLocation>
    <subcellularLocation>
        <location evidence="1">Cytoplasm</location>
    </subcellularLocation>
    <text evidence="1">Exclusively nuclear during interphase. Detected in the nucleus and the cytoplasm at prophase. Cytoplasmic when associated with SCAPER.</text>
</comment>
<comment type="PTM">
    <text evidence="1">Polyubiquitinated via 'Lys-11'-linked ubiquitin by the anaphase-promoting complex (APC/C), leading to its degradation by the proteasome. Deubiquitinated and stabilized by USP37 enables entry into S phase. Ubiquitinated during the G1 phase by the SCF(FBXO31) complex, leading to its proteasomal degradation.</text>
</comment>
<comment type="similarity">
    <text evidence="4">Belongs to the cyclin family. Cyclin AB subfamily.</text>
</comment>
<sequence length="430" mass="48262">MLGSSAHGPAAREAGSAVTLQQTAFQEDQENVNPEKAAPAQQPRTRAGLAVLRAGNSRGPAPQRPKTRRVAPLKDLPINDEYVPVPPWKANNKQPAFTIHVDEAEEEIQKRPTESKKSESEDVLAFNSAVTLPGPRKPLAPLDYPMDGSFESPHTMEMSVVLEDEKPVSVNEVPDYHEDIHTYLREMEVKCKPKVGYMKKQPDITNSMRAILVDWLVEVGEEYKLQNETLHLAVNYIDRFLSSMSVLRGKLQLVGTAAMLLASKFEEIYPPEVAEFVYITDDTYTKKQVLRMEHLVLKVLAFDLAAPTINQFLTQYFLHQQPANCKVESLAMFLGELSLIDADPYLKYLPSVIAAAAFHLALYTVTGQSWPESLVQKTGYTLETLKPCLLDLHQTYLRAPQHAQQSIREKYKNSKYHGVSLLNPPETLNV</sequence>
<evidence type="ECO:0000250" key="1">
    <source>
        <dbReference type="UniProtKB" id="P20248"/>
    </source>
</evidence>
<evidence type="ECO:0000256" key="2">
    <source>
        <dbReference type="SAM" id="MobiDB-lite"/>
    </source>
</evidence>
<evidence type="ECO:0000303" key="3">
    <source>
    </source>
</evidence>
<evidence type="ECO:0000305" key="4"/>
<evidence type="ECO:0007829" key="5">
    <source>
        <dbReference type="PDB" id="1VIN"/>
    </source>
</evidence>
<evidence type="ECO:0007829" key="6">
    <source>
        <dbReference type="PDB" id="3BHV"/>
    </source>
</evidence>
<evidence type="ECO:0007829" key="7">
    <source>
        <dbReference type="PDB" id="3DDQ"/>
    </source>
</evidence>
<feature type="chain" id="PRO_0000080337" description="Cyclin-A2">
    <location>
        <begin position="1"/>
        <end position="430"/>
    </location>
</feature>
<feature type="region of interest" description="Disordered" evidence="2">
    <location>
        <begin position="1"/>
        <end position="80"/>
    </location>
</feature>
<feature type="region of interest" description="Disordered" evidence="2">
    <location>
        <begin position="106"/>
        <end position="129"/>
    </location>
</feature>
<feature type="compositionally biased region" description="Basic and acidic residues" evidence="2">
    <location>
        <begin position="107"/>
        <end position="120"/>
    </location>
</feature>
<feature type="modified residue" description="N-acetylmethionine" evidence="1">
    <location>
        <position position="1"/>
    </location>
</feature>
<feature type="modified residue" description="Phosphoserine" evidence="1">
    <location>
        <position position="5"/>
    </location>
</feature>
<feature type="sequence conflict" description="In Ref. 2; CAA48398." evidence="4" ref="2">
    <original>A</original>
    <variation>E</variation>
    <location>
        <position position="24"/>
    </location>
</feature>
<feature type="sequence conflict" description="In Ref. 2; CAA48398." evidence="4" ref="2">
    <location>
        <position position="107"/>
    </location>
</feature>
<feature type="helix" evidence="7">
    <location>
        <begin position="170"/>
        <end position="172"/>
    </location>
</feature>
<feature type="turn" evidence="7">
    <location>
        <begin position="174"/>
        <end position="176"/>
    </location>
</feature>
<feature type="helix" evidence="7">
    <location>
        <begin position="177"/>
        <end position="190"/>
    </location>
</feature>
<feature type="turn" evidence="6">
    <location>
        <begin position="195"/>
        <end position="197"/>
    </location>
</feature>
<feature type="helix" evidence="7">
    <location>
        <begin position="198"/>
        <end position="200"/>
    </location>
</feature>
<feature type="helix" evidence="7">
    <location>
        <begin position="206"/>
        <end position="222"/>
    </location>
</feature>
<feature type="helix" evidence="7">
    <location>
        <begin position="227"/>
        <end position="243"/>
    </location>
</feature>
<feature type="helix" evidence="7">
    <location>
        <begin position="248"/>
        <end position="250"/>
    </location>
</feature>
<feature type="helix" evidence="7">
    <location>
        <begin position="251"/>
        <end position="266"/>
    </location>
</feature>
<feature type="helix" evidence="7">
    <location>
        <begin position="273"/>
        <end position="279"/>
    </location>
</feature>
<feature type="turn" evidence="7">
    <location>
        <begin position="280"/>
        <end position="282"/>
    </location>
</feature>
<feature type="helix" evidence="7">
    <location>
        <begin position="286"/>
        <end position="299"/>
    </location>
</feature>
<feature type="turn" evidence="7">
    <location>
        <begin position="300"/>
        <end position="302"/>
    </location>
</feature>
<feature type="helix" evidence="7">
    <location>
        <begin position="309"/>
        <end position="317"/>
    </location>
</feature>
<feature type="strand" evidence="5">
    <location>
        <begin position="320"/>
        <end position="322"/>
    </location>
</feature>
<feature type="helix" evidence="7">
    <location>
        <begin position="325"/>
        <end position="340"/>
    </location>
</feature>
<feature type="helix" evidence="7">
    <location>
        <begin position="342"/>
        <end position="345"/>
    </location>
</feature>
<feature type="helix" evidence="7">
    <location>
        <begin position="350"/>
        <end position="366"/>
    </location>
</feature>
<feature type="helix" evidence="7">
    <location>
        <begin position="372"/>
        <end position="378"/>
    </location>
</feature>
<feature type="helix" evidence="7">
    <location>
        <begin position="382"/>
        <end position="398"/>
    </location>
</feature>
<feature type="helix" evidence="7">
    <location>
        <begin position="399"/>
        <end position="401"/>
    </location>
</feature>
<feature type="helix" evidence="7">
    <location>
        <begin position="406"/>
        <end position="410"/>
    </location>
</feature>
<feature type="helix" evidence="7">
    <location>
        <begin position="414"/>
        <end position="416"/>
    </location>
</feature>
<feature type="helix" evidence="7">
    <location>
        <begin position="419"/>
        <end position="421"/>
    </location>
</feature>
<reference key="1">
    <citation type="submission" date="2006-06" db="EMBL/GenBank/DDBJ databases">
        <authorList>
            <consortium name="NIH - Mammalian Gene Collection (MGC) project"/>
        </authorList>
    </citation>
    <scope>NUCLEOTIDE SEQUENCE [LARGE SCALE MRNA]</scope>
    <source>
        <strain>Hereford</strain>
        <tissue>Thalamus</tissue>
    </source>
</reference>
<reference key="2">
    <citation type="journal article" date="1992" name="Mol. Biol. Cell">
        <title>Identification of the domains in cyclin A required for binding to, and activation of, p34cdc2 and p32cdk2 protein kinase subunits.</title>
        <authorList>
            <person name="Kobayashi H."/>
            <person name="Stewart E."/>
            <person name="Poon R."/>
            <person name="Adamczewski J.P."/>
            <person name="Gannon J."/>
            <person name="Hunt T."/>
        </authorList>
    </citation>
    <scope>NUCLEOTIDE SEQUENCE [MRNA] OF 24-430</scope>
    <source>
        <tissue>Lymphocyte</tissue>
    </source>
</reference>
<reference key="3">
    <citation type="journal article" date="1995" name="Structure">
        <title>The crystal structure of cyclin A.</title>
        <authorList>
            <person name="Brown N.R."/>
            <person name="Noble M.E.M."/>
            <person name="Endicott J.A."/>
            <person name="Garman E.F."/>
            <person name="Wakatsuki S."/>
            <person name="Mitchell E."/>
            <person name="Rasmussen B."/>
            <person name="Hunt T."/>
            <person name="Johnson L.N."/>
        </authorList>
    </citation>
    <scope>X-RAY CRYSTALLOGRAPHY (2.0 ANGSTROMS) OF 179-430</scope>
</reference>
<dbReference type="EMBL" id="BC118203">
    <property type="protein sequence ID" value="AAI18204.1"/>
    <property type="molecule type" value="mRNA"/>
</dbReference>
<dbReference type="EMBL" id="X68321">
    <property type="protein sequence ID" value="CAA48398.1"/>
    <property type="molecule type" value="mRNA"/>
</dbReference>
<dbReference type="PIR" id="S24788">
    <property type="entry name" value="S24788"/>
</dbReference>
<dbReference type="RefSeq" id="NP_001068591.1">
    <property type="nucleotide sequence ID" value="NM_001075123.2"/>
</dbReference>
<dbReference type="PDB" id="1VIN">
    <property type="method" value="X-ray"/>
    <property type="resolution" value="2.00 A"/>
    <property type="chains" value="A=170-429"/>
</dbReference>
<dbReference type="PDB" id="2G9X">
    <property type="method" value="X-ray"/>
    <property type="resolution" value="2.50 A"/>
    <property type="chains" value="B/D=170-430"/>
</dbReference>
<dbReference type="PDB" id="3BHT">
    <property type="method" value="X-ray"/>
    <property type="resolution" value="2.00 A"/>
    <property type="chains" value="B/D=169-430"/>
</dbReference>
<dbReference type="PDB" id="3BHU">
    <property type="method" value="X-ray"/>
    <property type="resolution" value="2.30 A"/>
    <property type="chains" value="B/D=169-430"/>
</dbReference>
<dbReference type="PDB" id="3BHV">
    <property type="method" value="X-ray"/>
    <property type="resolution" value="2.10 A"/>
    <property type="chains" value="B/D=169-430"/>
</dbReference>
<dbReference type="PDB" id="3DDP">
    <property type="method" value="X-ray"/>
    <property type="resolution" value="2.70 A"/>
    <property type="chains" value="B/D=169-430"/>
</dbReference>
<dbReference type="PDB" id="3DDQ">
    <property type="method" value="X-ray"/>
    <property type="resolution" value="1.80 A"/>
    <property type="chains" value="B/D=169-430"/>
</dbReference>
<dbReference type="PDB" id="3DOG">
    <property type="method" value="X-ray"/>
    <property type="resolution" value="2.70 A"/>
    <property type="chains" value="B/D=169-430"/>
</dbReference>
<dbReference type="PDB" id="3MY5">
    <property type="method" value="X-ray"/>
    <property type="resolution" value="2.10 A"/>
    <property type="chains" value="B/D=169-430"/>
</dbReference>
<dbReference type="PDB" id="3TNW">
    <property type="method" value="X-ray"/>
    <property type="resolution" value="2.00 A"/>
    <property type="chains" value="B/D=169-430"/>
</dbReference>
<dbReference type="PDB" id="4BCN">
    <property type="method" value="X-ray"/>
    <property type="resolution" value="2.10 A"/>
    <property type="chains" value="D=169-430"/>
</dbReference>
<dbReference type="PDB" id="4BCO">
    <property type="method" value="X-ray"/>
    <property type="resolution" value="2.05 A"/>
    <property type="chains" value="B/D=169-429"/>
</dbReference>
<dbReference type="PDB" id="4BCQ">
    <property type="method" value="X-ray"/>
    <property type="resolution" value="2.40 A"/>
    <property type="chains" value="B=169-429, D=169-430"/>
</dbReference>
<dbReference type="PDB" id="6GUB">
    <property type="method" value="X-ray"/>
    <property type="resolution" value="2.52 A"/>
    <property type="chains" value="B/D=170-430"/>
</dbReference>
<dbReference type="PDB" id="6GUC">
    <property type="method" value="X-ray"/>
    <property type="resolution" value="2.00 A"/>
    <property type="chains" value="B/D=170-430"/>
</dbReference>
<dbReference type="PDB" id="6GUE">
    <property type="method" value="X-ray"/>
    <property type="resolution" value="1.99 A"/>
    <property type="chains" value="B/D=169-430"/>
</dbReference>
<dbReference type="PDB" id="6GUF">
    <property type="method" value="X-ray"/>
    <property type="resolution" value="2.65 A"/>
    <property type="chains" value="B/D=170-430"/>
</dbReference>
<dbReference type="PDB" id="8ROZ">
    <property type="method" value="EM"/>
    <property type="resolution" value="2.70 A"/>
    <property type="chains" value="B=170-430"/>
</dbReference>
<dbReference type="PDBsum" id="1VIN"/>
<dbReference type="PDBsum" id="2G9X"/>
<dbReference type="PDBsum" id="3BHT"/>
<dbReference type="PDBsum" id="3BHU"/>
<dbReference type="PDBsum" id="3BHV"/>
<dbReference type="PDBsum" id="3DDP"/>
<dbReference type="PDBsum" id="3DDQ"/>
<dbReference type="PDBsum" id="3DOG"/>
<dbReference type="PDBsum" id="3MY5"/>
<dbReference type="PDBsum" id="3TNW"/>
<dbReference type="PDBsum" id="4BCN"/>
<dbReference type="PDBsum" id="4BCO"/>
<dbReference type="PDBsum" id="4BCQ"/>
<dbReference type="PDBsum" id="6GUB"/>
<dbReference type="PDBsum" id="6GUC"/>
<dbReference type="PDBsum" id="6GUE"/>
<dbReference type="PDBsum" id="6GUF"/>
<dbReference type="PDBsum" id="8ROZ"/>
<dbReference type="EMDB" id="EMD-19408"/>
<dbReference type="SMR" id="P30274"/>
<dbReference type="BioGRID" id="158986">
    <property type="interactions" value="5"/>
</dbReference>
<dbReference type="DIP" id="DIP-693N"/>
<dbReference type="FunCoup" id="P30274">
    <property type="interactions" value="1133"/>
</dbReference>
<dbReference type="IntAct" id="P30274">
    <property type="interactions" value="3"/>
</dbReference>
<dbReference type="STRING" id="9913.ENSBTAP00000006503"/>
<dbReference type="BindingDB" id="P30274"/>
<dbReference type="ChEMBL" id="CHEMBL4106153"/>
<dbReference type="PaxDb" id="9913-ENSBTAP00000006503"/>
<dbReference type="GeneID" id="281667"/>
<dbReference type="KEGG" id="bta:281667"/>
<dbReference type="CTD" id="890"/>
<dbReference type="eggNOG" id="KOG0654">
    <property type="taxonomic scope" value="Eukaryota"/>
</dbReference>
<dbReference type="HOGENOM" id="CLU_020695_3_2_1"/>
<dbReference type="InParanoid" id="P30274"/>
<dbReference type="OrthoDB" id="5590282at2759"/>
<dbReference type="EvolutionaryTrace" id="P30274"/>
<dbReference type="Proteomes" id="UP000009136">
    <property type="component" value="Unplaced"/>
</dbReference>
<dbReference type="GO" id="GO:0097124">
    <property type="term" value="C:cyclin A2-CDK2 complex"/>
    <property type="evidence" value="ECO:0000318"/>
    <property type="project" value="GO_Central"/>
</dbReference>
<dbReference type="GO" id="GO:0000307">
    <property type="term" value="C:cyclin-dependent protein kinase holoenzyme complex"/>
    <property type="evidence" value="ECO:0000250"/>
    <property type="project" value="UniProtKB"/>
</dbReference>
<dbReference type="GO" id="GO:0005737">
    <property type="term" value="C:cytoplasm"/>
    <property type="evidence" value="ECO:0000250"/>
    <property type="project" value="UniProtKB"/>
</dbReference>
<dbReference type="GO" id="GO:0005815">
    <property type="term" value="C:microtubule organizing center"/>
    <property type="evidence" value="ECO:0000318"/>
    <property type="project" value="GO_Central"/>
</dbReference>
<dbReference type="GO" id="GO:0005634">
    <property type="term" value="C:nucleus"/>
    <property type="evidence" value="ECO:0000250"/>
    <property type="project" value="AgBase"/>
</dbReference>
<dbReference type="GO" id="GO:0016538">
    <property type="term" value="F:cyclin-dependent protein serine/threonine kinase regulator activity"/>
    <property type="evidence" value="ECO:0000318"/>
    <property type="project" value="GO_Central"/>
</dbReference>
<dbReference type="GO" id="GO:0044843">
    <property type="term" value="P:cell cycle G1/S phase transition"/>
    <property type="evidence" value="ECO:0000250"/>
    <property type="project" value="UniProtKB"/>
</dbReference>
<dbReference type="GO" id="GO:0051301">
    <property type="term" value="P:cell division"/>
    <property type="evidence" value="ECO:0007669"/>
    <property type="project" value="UniProtKB-KW"/>
</dbReference>
<dbReference type="GO" id="GO:0000082">
    <property type="term" value="P:G1/S transition of mitotic cell cycle"/>
    <property type="evidence" value="ECO:0000318"/>
    <property type="project" value="GO_Central"/>
</dbReference>
<dbReference type="GO" id="GO:0000086">
    <property type="term" value="P:G2/M transition of mitotic cell cycle"/>
    <property type="evidence" value="ECO:0000250"/>
    <property type="project" value="UniProtKB"/>
</dbReference>
<dbReference type="GO" id="GO:0006275">
    <property type="term" value="P:regulation of DNA replication"/>
    <property type="evidence" value="ECO:0000250"/>
    <property type="project" value="UniProtKB"/>
</dbReference>
<dbReference type="CDD" id="cd20561">
    <property type="entry name" value="CYCLIN_CCNA2_rpt1"/>
    <property type="match status" value="1"/>
</dbReference>
<dbReference type="CDD" id="cd20564">
    <property type="entry name" value="CYCLIN_CCNA2_rpt2"/>
    <property type="match status" value="1"/>
</dbReference>
<dbReference type="FunFam" id="1.10.472.10:FF:000037">
    <property type="entry name" value="Cyclin-A2"/>
    <property type="match status" value="1"/>
</dbReference>
<dbReference type="Gene3D" id="1.10.472.10">
    <property type="entry name" value="Cyclin-like"/>
    <property type="match status" value="2"/>
</dbReference>
<dbReference type="InterPro" id="IPR039361">
    <property type="entry name" value="Cyclin"/>
</dbReference>
<dbReference type="InterPro" id="IPR032447">
    <property type="entry name" value="Cyclin-A_N"/>
</dbReference>
<dbReference type="InterPro" id="IPR013763">
    <property type="entry name" value="Cyclin-like_dom"/>
</dbReference>
<dbReference type="InterPro" id="IPR036915">
    <property type="entry name" value="Cyclin-like_sf"/>
</dbReference>
<dbReference type="InterPro" id="IPR046965">
    <property type="entry name" value="Cyclin_A/B-like"/>
</dbReference>
<dbReference type="InterPro" id="IPR004367">
    <property type="entry name" value="Cyclin_C-dom"/>
</dbReference>
<dbReference type="InterPro" id="IPR006671">
    <property type="entry name" value="Cyclin_N"/>
</dbReference>
<dbReference type="InterPro" id="IPR048258">
    <property type="entry name" value="Cyclins_cyclin-box"/>
</dbReference>
<dbReference type="PANTHER" id="PTHR10177">
    <property type="entry name" value="CYCLINS"/>
    <property type="match status" value="1"/>
</dbReference>
<dbReference type="Pfam" id="PF02984">
    <property type="entry name" value="Cyclin_C"/>
    <property type="match status" value="1"/>
</dbReference>
<dbReference type="Pfam" id="PF00134">
    <property type="entry name" value="Cyclin_N"/>
    <property type="match status" value="1"/>
</dbReference>
<dbReference type="Pfam" id="PF16500">
    <property type="entry name" value="Cyclin_N2"/>
    <property type="match status" value="1"/>
</dbReference>
<dbReference type="PIRSF" id="PIRSF001771">
    <property type="entry name" value="Cyclin_A_B_D_E"/>
    <property type="match status" value="1"/>
</dbReference>
<dbReference type="SMART" id="SM00385">
    <property type="entry name" value="CYCLIN"/>
    <property type="match status" value="2"/>
</dbReference>
<dbReference type="SMART" id="SM01332">
    <property type="entry name" value="Cyclin_C"/>
    <property type="match status" value="1"/>
</dbReference>
<dbReference type="SUPFAM" id="SSF47954">
    <property type="entry name" value="Cyclin-like"/>
    <property type="match status" value="2"/>
</dbReference>
<dbReference type="PROSITE" id="PS00292">
    <property type="entry name" value="CYCLINS"/>
    <property type="match status" value="1"/>
</dbReference>
<accession>P30274</accession>
<accession>Q17QS7</accession>
<name>CCNA2_BOVIN</name>
<protein>
    <recommendedName>
        <fullName evidence="4">Cyclin-A2</fullName>
        <shortName evidence="3">Cyclin-A</shortName>
    </recommendedName>
</protein>
<organism>
    <name type="scientific">Bos taurus</name>
    <name type="common">Bovine</name>
    <dbReference type="NCBI Taxonomy" id="9913"/>
    <lineage>
        <taxon>Eukaryota</taxon>
        <taxon>Metazoa</taxon>
        <taxon>Chordata</taxon>
        <taxon>Craniata</taxon>
        <taxon>Vertebrata</taxon>
        <taxon>Euteleostomi</taxon>
        <taxon>Mammalia</taxon>
        <taxon>Eutheria</taxon>
        <taxon>Laurasiatheria</taxon>
        <taxon>Artiodactyla</taxon>
        <taxon>Ruminantia</taxon>
        <taxon>Pecora</taxon>
        <taxon>Bovidae</taxon>
        <taxon>Bovinae</taxon>
        <taxon>Bos</taxon>
    </lineage>
</organism>
<keyword id="KW-0002">3D-structure</keyword>
<keyword id="KW-0007">Acetylation</keyword>
<keyword id="KW-0131">Cell cycle</keyword>
<keyword id="KW-0132">Cell division</keyword>
<keyword id="KW-0195">Cyclin</keyword>
<keyword id="KW-0963">Cytoplasm</keyword>
<keyword id="KW-0498">Mitosis</keyword>
<keyword id="KW-0539">Nucleus</keyword>
<keyword id="KW-0597">Phosphoprotein</keyword>
<keyword id="KW-1185">Reference proteome</keyword>
<keyword id="KW-0832">Ubl conjugation</keyword>
<proteinExistence type="evidence at protein level"/>
<gene>
    <name evidence="1" type="primary">CCNA2</name>
</gene>